<protein>
    <recommendedName>
        <fullName evidence="1">Phosphatidylglycerol--prolipoprotein diacylglyceryl transferase</fullName>
        <ecNumber evidence="1">2.5.1.145</ecNumber>
    </recommendedName>
</protein>
<feature type="chain" id="PRO_1000085083" description="Phosphatidylglycerol--prolipoprotein diacylglyceryl transferase">
    <location>
        <begin position="1"/>
        <end position="291"/>
    </location>
</feature>
<feature type="transmembrane region" description="Helical" evidence="1">
    <location>
        <begin position="21"/>
        <end position="41"/>
    </location>
</feature>
<feature type="transmembrane region" description="Helical" evidence="1">
    <location>
        <begin position="60"/>
        <end position="80"/>
    </location>
</feature>
<feature type="transmembrane region" description="Helical" evidence="1">
    <location>
        <begin position="96"/>
        <end position="116"/>
    </location>
</feature>
<feature type="transmembrane region" description="Helical" evidence="1">
    <location>
        <begin position="130"/>
        <end position="150"/>
    </location>
</feature>
<feature type="transmembrane region" description="Helical" evidence="1">
    <location>
        <begin position="198"/>
        <end position="218"/>
    </location>
</feature>
<feature type="transmembrane region" description="Helical" evidence="1">
    <location>
        <begin position="225"/>
        <end position="245"/>
    </location>
</feature>
<feature type="transmembrane region" description="Helical" evidence="1">
    <location>
        <begin position="260"/>
        <end position="280"/>
    </location>
</feature>
<feature type="binding site" evidence="1">
    <location>
        <position position="143"/>
    </location>
    <ligand>
        <name>a 1,2-diacyl-sn-glycero-3-phospho-(1'-sn-glycerol)</name>
        <dbReference type="ChEBI" id="CHEBI:64716"/>
    </ligand>
</feature>
<name>LGT_SALAR</name>
<dbReference type="EC" id="2.5.1.145" evidence="1"/>
<dbReference type="EMBL" id="CP000880">
    <property type="protein sequence ID" value="ABX24425.1"/>
    <property type="molecule type" value="Genomic_DNA"/>
</dbReference>
<dbReference type="SMR" id="A9MS81"/>
<dbReference type="STRING" id="41514.SARI_04658"/>
<dbReference type="KEGG" id="ses:SARI_04658"/>
<dbReference type="HOGENOM" id="CLU_013386_1_0_6"/>
<dbReference type="UniPathway" id="UPA00664"/>
<dbReference type="Proteomes" id="UP000002084">
    <property type="component" value="Chromosome"/>
</dbReference>
<dbReference type="GO" id="GO:0005886">
    <property type="term" value="C:plasma membrane"/>
    <property type="evidence" value="ECO:0007669"/>
    <property type="project" value="UniProtKB-SubCell"/>
</dbReference>
<dbReference type="GO" id="GO:0008961">
    <property type="term" value="F:phosphatidylglycerol-prolipoprotein diacylglyceryl transferase activity"/>
    <property type="evidence" value="ECO:0007669"/>
    <property type="project" value="UniProtKB-UniRule"/>
</dbReference>
<dbReference type="GO" id="GO:0042158">
    <property type="term" value="P:lipoprotein biosynthetic process"/>
    <property type="evidence" value="ECO:0007669"/>
    <property type="project" value="UniProtKB-UniRule"/>
</dbReference>
<dbReference type="HAMAP" id="MF_01147">
    <property type="entry name" value="Lgt"/>
    <property type="match status" value="1"/>
</dbReference>
<dbReference type="InterPro" id="IPR001640">
    <property type="entry name" value="Lgt"/>
</dbReference>
<dbReference type="NCBIfam" id="TIGR00544">
    <property type="entry name" value="lgt"/>
    <property type="match status" value="1"/>
</dbReference>
<dbReference type="PANTHER" id="PTHR30589:SF0">
    <property type="entry name" value="PHOSPHATIDYLGLYCEROL--PROLIPOPROTEIN DIACYLGLYCERYL TRANSFERASE"/>
    <property type="match status" value="1"/>
</dbReference>
<dbReference type="PANTHER" id="PTHR30589">
    <property type="entry name" value="PROLIPOPROTEIN DIACYLGLYCERYL TRANSFERASE"/>
    <property type="match status" value="1"/>
</dbReference>
<dbReference type="Pfam" id="PF01790">
    <property type="entry name" value="LGT"/>
    <property type="match status" value="1"/>
</dbReference>
<dbReference type="PROSITE" id="PS01311">
    <property type="entry name" value="LGT"/>
    <property type="match status" value="1"/>
</dbReference>
<evidence type="ECO:0000255" key="1">
    <source>
        <dbReference type="HAMAP-Rule" id="MF_01147"/>
    </source>
</evidence>
<accession>A9MS81</accession>
<organism>
    <name type="scientific">Salmonella arizonae (strain ATCC BAA-731 / CDC346-86 / RSK2980)</name>
    <dbReference type="NCBI Taxonomy" id="41514"/>
    <lineage>
        <taxon>Bacteria</taxon>
        <taxon>Pseudomonadati</taxon>
        <taxon>Pseudomonadota</taxon>
        <taxon>Gammaproteobacteria</taxon>
        <taxon>Enterobacterales</taxon>
        <taxon>Enterobacteriaceae</taxon>
        <taxon>Salmonella</taxon>
    </lineage>
</organism>
<sequence length="291" mass="32981">MTSSYLHFPDFDPVIFSIGPVALHWYGLMYLVGFVFAMWLAVRRANRPGSGWTKNEVENLLYAGFLGVFLGGRIGYVLFYNLPLFLDNPLYLFRVWDGGMSFHGGLIGVILVMIIFAKRTKRSFFQVSDFIAPLIPFGLGAGRLGNFINGELWGRVDPNFPFAMLFPGSRAEDIALLPSHPQWQPIFDTYGVLPRHPSQLYELVLEGVVLFIILNLFIRKPRPMGAVSGLFLIGYGAFRIIVEFFRQPDAQFTGAWVQYISMGQILSIPMIIAGAIMMVWAYRRRPQQHVS</sequence>
<keyword id="KW-0997">Cell inner membrane</keyword>
<keyword id="KW-1003">Cell membrane</keyword>
<keyword id="KW-0472">Membrane</keyword>
<keyword id="KW-1185">Reference proteome</keyword>
<keyword id="KW-0808">Transferase</keyword>
<keyword id="KW-0812">Transmembrane</keyword>
<keyword id="KW-1133">Transmembrane helix</keyword>
<gene>
    <name evidence="1" type="primary">lgt</name>
    <name type="ordered locus">SARI_04658</name>
</gene>
<proteinExistence type="inferred from homology"/>
<reference key="1">
    <citation type="submission" date="2007-11" db="EMBL/GenBank/DDBJ databases">
        <authorList>
            <consortium name="The Salmonella enterica serovar Arizonae Genome Sequencing Project"/>
            <person name="McClelland M."/>
            <person name="Sanderson E.K."/>
            <person name="Porwollik S."/>
            <person name="Spieth J."/>
            <person name="Clifton W.S."/>
            <person name="Fulton R."/>
            <person name="Chunyan W."/>
            <person name="Wollam A."/>
            <person name="Shah N."/>
            <person name="Pepin K."/>
            <person name="Bhonagiri V."/>
            <person name="Nash W."/>
            <person name="Johnson M."/>
            <person name="Thiruvilangam P."/>
            <person name="Wilson R."/>
        </authorList>
    </citation>
    <scope>NUCLEOTIDE SEQUENCE [LARGE SCALE GENOMIC DNA]</scope>
    <source>
        <strain>ATCC BAA-731 / CDC346-86 / RSK2980</strain>
    </source>
</reference>
<comment type="function">
    <text evidence="1">Catalyzes the transfer of the diacylglyceryl group from phosphatidylglycerol to the sulfhydryl group of the N-terminal cysteine of a prolipoprotein, the first step in the formation of mature lipoproteins.</text>
</comment>
<comment type="catalytic activity">
    <reaction evidence="1">
        <text>L-cysteinyl-[prolipoprotein] + a 1,2-diacyl-sn-glycero-3-phospho-(1'-sn-glycerol) = an S-1,2-diacyl-sn-glyceryl-L-cysteinyl-[prolipoprotein] + sn-glycerol 1-phosphate + H(+)</text>
        <dbReference type="Rhea" id="RHEA:56712"/>
        <dbReference type="Rhea" id="RHEA-COMP:14679"/>
        <dbReference type="Rhea" id="RHEA-COMP:14680"/>
        <dbReference type="ChEBI" id="CHEBI:15378"/>
        <dbReference type="ChEBI" id="CHEBI:29950"/>
        <dbReference type="ChEBI" id="CHEBI:57685"/>
        <dbReference type="ChEBI" id="CHEBI:64716"/>
        <dbReference type="ChEBI" id="CHEBI:140658"/>
        <dbReference type="EC" id="2.5.1.145"/>
    </reaction>
</comment>
<comment type="pathway">
    <text evidence="1">Protein modification; lipoprotein biosynthesis (diacylglyceryl transfer).</text>
</comment>
<comment type="subcellular location">
    <subcellularLocation>
        <location evidence="1">Cell inner membrane</location>
        <topology evidence="1">Multi-pass membrane protein</topology>
    </subcellularLocation>
</comment>
<comment type="similarity">
    <text evidence="1">Belongs to the Lgt family.</text>
</comment>